<feature type="chain" id="PRO_0000132496" description="Small ribosomal subunit protein uS4">
    <location>
        <begin position="1"/>
        <end position="208"/>
    </location>
</feature>
<feature type="domain" description="S4 RNA-binding" evidence="1">
    <location>
        <begin position="97"/>
        <end position="160"/>
    </location>
</feature>
<accession>P0A0Y0</accession>
<accession>Q9Z3E8</accession>
<sequence length="208" mass="23281">MARYIGPTCKLARREGADLSLKSPARALDSKCKLEQKPGQHGAARKGKLSDYATQLREKQKVKRIYGLLERQFRNYYKKASTKKGNTGENLLQLLETRLDNVCYRMGFAVTRPAARQLVSHRGVLVNGKSVNLASYQIKAGDAITLSEKAQKQLRVQEALTVAEQHDMTPSWVEVDSKKFSGVFKAVPDRADLPSDINEALIVELYSK</sequence>
<name>RS4_XANAC</name>
<organism>
    <name type="scientific">Xanthomonas axonopodis pv. citri (strain 306)</name>
    <dbReference type="NCBI Taxonomy" id="190486"/>
    <lineage>
        <taxon>Bacteria</taxon>
        <taxon>Pseudomonadati</taxon>
        <taxon>Pseudomonadota</taxon>
        <taxon>Gammaproteobacteria</taxon>
        <taxon>Lysobacterales</taxon>
        <taxon>Lysobacteraceae</taxon>
        <taxon>Xanthomonas</taxon>
    </lineage>
</organism>
<comment type="function">
    <text evidence="1">One of the primary rRNA binding proteins, it binds directly to 16S rRNA where it nucleates assembly of the body of the 30S subunit.</text>
</comment>
<comment type="function">
    <text evidence="1">With S5 and S12 plays an important role in translational accuracy.</text>
</comment>
<comment type="subunit">
    <text evidence="1">Part of the 30S ribosomal subunit. Contacts protein S5. The interaction surface between S4 and S5 is involved in control of translational fidelity.</text>
</comment>
<comment type="similarity">
    <text evidence="1">Belongs to the universal ribosomal protein uS4 family.</text>
</comment>
<reference key="1">
    <citation type="journal article" date="2002" name="Nature">
        <title>Comparison of the genomes of two Xanthomonas pathogens with differing host specificities.</title>
        <authorList>
            <person name="da Silva A.C.R."/>
            <person name="Ferro J.A."/>
            <person name="Reinach F.C."/>
            <person name="Farah C.S."/>
            <person name="Furlan L.R."/>
            <person name="Quaggio R.B."/>
            <person name="Monteiro-Vitorello C.B."/>
            <person name="Van Sluys M.A."/>
            <person name="Almeida N.F. Jr."/>
            <person name="Alves L.M.C."/>
            <person name="do Amaral A.M."/>
            <person name="Bertolini M.C."/>
            <person name="Camargo L.E.A."/>
            <person name="Camarotte G."/>
            <person name="Cannavan F."/>
            <person name="Cardozo J."/>
            <person name="Chambergo F."/>
            <person name="Ciapina L.P."/>
            <person name="Cicarelli R.M.B."/>
            <person name="Coutinho L.L."/>
            <person name="Cursino-Santos J.R."/>
            <person name="El-Dorry H."/>
            <person name="Faria J.B."/>
            <person name="Ferreira A.J.S."/>
            <person name="Ferreira R.C.C."/>
            <person name="Ferro M.I.T."/>
            <person name="Formighieri E.F."/>
            <person name="Franco M.C."/>
            <person name="Greggio C.C."/>
            <person name="Gruber A."/>
            <person name="Katsuyama A.M."/>
            <person name="Kishi L.T."/>
            <person name="Leite R.P."/>
            <person name="Lemos E.G.M."/>
            <person name="Lemos M.V.F."/>
            <person name="Locali E.C."/>
            <person name="Machado M.A."/>
            <person name="Madeira A.M.B.N."/>
            <person name="Martinez-Rossi N.M."/>
            <person name="Martins E.C."/>
            <person name="Meidanis J."/>
            <person name="Menck C.F.M."/>
            <person name="Miyaki C.Y."/>
            <person name="Moon D.H."/>
            <person name="Moreira L.M."/>
            <person name="Novo M.T.M."/>
            <person name="Okura V.K."/>
            <person name="Oliveira M.C."/>
            <person name="Oliveira V.R."/>
            <person name="Pereira H.A."/>
            <person name="Rossi A."/>
            <person name="Sena J.A.D."/>
            <person name="Silva C."/>
            <person name="de Souza R.F."/>
            <person name="Spinola L.A.F."/>
            <person name="Takita M.A."/>
            <person name="Tamura R.E."/>
            <person name="Teixeira E.C."/>
            <person name="Tezza R.I.D."/>
            <person name="Trindade dos Santos M."/>
            <person name="Truffi D."/>
            <person name="Tsai S.M."/>
            <person name="White F.F."/>
            <person name="Setubal J.C."/>
            <person name="Kitajima J.P."/>
        </authorList>
    </citation>
    <scope>NUCLEOTIDE SEQUENCE [LARGE SCALE GENOMIC DNA]</scope>
    <source>
        <strain>306</strain>
    </source>
</reference>
<dbReference type="EMBL" id="AE008923">
    <property type="protein sequence ID" value="AAM35878.1"/>
    <property type="molecule type" value="Genomic_DNA"/>
</dbReference>
<dbReference type="RefSeq" id="WP_002811641.1">
    <property type="nucleotide sequence ID" value="NC_003919.1"/>
</dbReference>
<dbReference type="SMR" id="P0A0Y0"/>
<dbReference type="GeneID" id="97509359"/>
<dbReference type="KEGG" id="xac:XAC0995"/>
<dbReference type="eggNOG" id="COG0522">
    <property type="taxonomic scope" value="Bacteria"/>
</dbReference>
<dbReference type="HOGENOM" id="CLU_092403_0_2_6"/>
<dbReference type="Proteomes" id="UP000000576">
    <property type="component" value="Chromosome"/>
</dbReference>
<dbReference type="GO" id="GO:0015935">
    <property type="term" value="C:small ribosomal subunit"/>
    <property type="evidence" value="ECO:0007669"/>
    <property type="project" value="InterPro"/>
</dbReference>
<dbReference type="GO" id="GO:0019843">
    <property type="term" value="F:rRNA binding"/>
    <property type="evidence" value="ECO:0007669"/>
    <property type="project" value="UniProtKB-UniRule"/>
</dbReference>
<dbReference type="GO" id="GO:0003735">
    <property type="term" value="F:structural constituent of ribosome"/>
    <property type="evidence" value="ECO:0007669"/>
    <property type="project" value="InterPro"/>
</dbReference>
<dbReference type="GO" id="GO:0042274">
    <property type="term" value="P:ribosomal small subunit biogenesis"/>
    <property type="evidence" value="ECO:0007669"/>
    <property type="project" value="TreeGrafter"/>
</dbReference>
<dbReference type="GO" id="GO:0006412">
    <property type="term" value="P:translation"/>
    <property type="evidence" value="ECO:0007669"/>
    <property type="project" value="UniProtKB-UniRule"/>
</dbReference>
<dbReference type="CDD" id="cd00165">
    <property type="entry name" value="S4"/>
    <property type="match status" value="1"/>
</dbReference>
<dbReference type="FunFam" id="1.10.1050.10:FF:000001">
    <property type="entry name" value="30S ribosomal protein S4"/>
    <property type="match status" value="1"/>
</dbReference>
<dbReference type="FunFam" id="3.10.290.10:FF:000001">
    <property type="entry name" value="30S ribosomal protein S4"/>
    <property type="match status" value="1"/>
</dbReference>
<dbReference type="Gene3D" id="1.10.1050.10">
    <property type="entry name" value="Ribosomal Protein S4 Delta 41, Chain A, domain 1"/>
    <property type="match status" value="1"/>
</dbReference>
<dbReference type="Gene3D" id="3.10.290.10">
    <property type="entry name" value="RNA-binding S4 domain"/>
    <property type="match status" value="1"/>
</dbReference>
<dbReference type="HAMAP" id="MF_01306_B">
    <property type="entry name" value="Ribosomal_uS4_B"/>
    <property type="match status" value="1"/>
</dbReference>
<dbReference type="InterPro" id="IPR022801">
    <property type="entry name" value="Ribosomal_uS4"/>
</dbReference>
<dbReference type="InterPro" id="IPR005709">
    <property type="entry name" value="Ribosomal_uS4_bac-type"/>
</dbReference>
<dbReference type="InterPro" id="IPR018079">
    <property type="entry name" value="Ribosomal_uS4_CS"/>
</dbReference>
<dbReference type="InterPro" id="IPR001912">
    <property type="entry name" value="Ribosomal_uS4_N"/>
</dbReference>
<dbReference type="InterPro" id="IPR002942">
    <property type="entry name" value="S4_RNA-bd"/>
</dbReference>
<dbReference type="InterPro" id="IPR036986">
    <property type="entry name" value="S4_RNA-bd_sf"/>
</dbReference>
<dbReference type="NCBIfam" id="NF003717">
    <property type="entry name" value="PRK05327.1"/>
    <property type="match status" value="1"/>
</dbReference>
<dbReference type="NCBIfam" id="TIGR01017">
    <property type="entry name" value="rpsD_bact"/>
    <property type="match status" value="1"/>
</dbReference>
<dbReference type="PANTHER" id="PTHR11831">
    <property type="entry name" value="30S 40S RIBOSOMAL PROTEIN"/>
    <property type="match status" value="1"/>
</dbReference>
<dbReference type="PANTHER" id="PTHR11831:SF4">
    <property type="entry name" value="SMALL RIBOSOMAL SUBUNIT PROTEIN US4M"/>
    <property type="match status" value="1"/>
</dbReference>
<dbReference type="Pfam" id="PF00163">
    <property type="entry name" value="Ribosomal_S4"/>
    <property type="match status" value="1"/>
</dbReference>
<dbReference type="Pfam" id="PF01479">
    <property type="entry name" value="S4"/>
    <property type="match status" value="1"/>
</dbReference>
<dbReference type="SMART" id="SM01390">
    <property type="entry name" value="Ribosomal_S4"/>
    <property type="match status" value="1"/>
</dbReference>
<dbReference type="SMART" id="SM00363">
    <property type="entry name" value="S4"/>
    <property type="match status" value="1"/>
</dbReference>
<dbReference type="SUPFAM" id="SSF55174">
    <property type="entry name" value="Alpha-L RNA-binding motif"/>
    <property type="match status" value="1"/>
</dbReference>
<dbReference type="PROSITE" id="PS00632">
    <property type="entry name" value="RIBOSOMAL_S4"/>
    <property type="match status" value="1"/>
</dbReference>
<dbReference type="PROSITE" id="PS50889">
    <property type="entry name" value="S4"/>
    <property type="match status" value="1"/>
</dbReference>
<protein>
    <recommendedName>
        <fullName evidence="1">Small ribosomal subunit protein uS4</fullName>
    </recommendedName>
    <alternativeName>
        <fullName evidence="2">30S ribosomal protein S4</fullName>
    </alternativeName>
</protein>
<evidence type="ECO:0000255" key="1">
    <source>
        <dbReference type="HAMAP-Rule" id="MF_01306"/>
    </source>
</evidence>
<evidence type="ECO:0000305" key="2"/>
<gene>
    <name evidence="1" type="primary">rpsD</name>
    <name type="ordered locus">XAC0995</name>
</gene>
<keyword id="KW-0687">Ribonucleoprotein</keyword>
<keyword id="KW-0689">Ribosomal protein</keyword>
<keyword id="KW-0694">RNA-binding</keyword>
<keyword id="KW-0699">rRNA-binding</keyword>
<proteinExistence type="inferred from homology"/>